<gene>
    <name type="primary">MTHFR1</name>
    <name type="ordered locus">At3g59970</name>
    <name type="ORF">F24G16.240</name>
</gene>
<protein>
    <recommendedName>
        <fullName>Methylenetetrahydrofolate reductase (NADH) 1</fullName>
        <shortName>AtMTHFR1</shortName>
        <ecNumber evidence="2">1.5.1.54</ecNumber>
    </recommendedName>
</protein>
<evidence type="ECO:0000250" key="1"/>
<evidence type="ECO:0000269" key="2">
    <source>
    </source>
</evidence>
<evidence type="ECO:0000305" key="3"/>
<sequence length="592" mass="66288">MKVVDKIKSVTEQGQTAFSFEFFPPKTEDGVENLFERMDRLVSYGPTFCDITWGAGGSTADLTLEIASRMQNVICVETMMHLTCTNMPIEKIDHALETIRSNGIQNVLALRGDPPHGQDKFVQVEGGFACALDLVNHIRSKYGDYFGITVAGYPEAHPDVIEADGLATPESYQSDLAYLKKKVDAGADLIVTQLFYDTDIFLKFVNDCRQIGINCPIVPGIMPISNYKGFLRMAGFCKTKIPAELTAALEPIKDNDEAVKAYGIHFATEMCKKILAHGITSLHLYTLNVDKSAIGILMNLGLIDESKISRSLPWRRPANVFRTKEDVRPIFWANRPKSYISRTKGWNDFPHGRWGDSHSAAYSTLSDYQFARPKGRDKKLQQEWVVPLKSIEDVQEKFKELCIGNLKSSPWSELDGLQPETKIINEQLGKINSNGFLTINSQPSVNAAKSDSPAIGWGGPGGYVYQKAYLEFFCSKDKLDTLVEKSKAFPSITYMAVNKSENWVSNTGESDVNAVTWGVFPAKEVIQPTIVDPASFKVWKDEAFEIWSRSWANLYPEDDPSRKLLEEVKNSYYLVSLVDNNYINGDIFSVFA</sequence>
<proteinExistence type="evidence at protein level"/>
<reference key="1">
    <citation type="journal article" date="1999" name="J. Biol. Chem.">
        <title>Isolation, characterization, and functional expression of cDNAs encoding NADH-dependent methylenetetrahydrofolate reductase from higher plants.</title>
        <authorList>
            <person name="Roje S."/>
            <person name="Wang H."/>
            <person name="McNeil S.D."/>
            <person name="Raymond R.K."/>
            <person name="Appling D.R."/>
            <person name="Shachar-Hill Y."/>
            <person name="Bohnert H.J."/>
            <person name="Hanson A.D."/>
        </authorList>
    </citation>
    <scope>NUCLEOTIDE SEQUENCE [MRNA] (ISOFORM 1)</scope>
    <scope>FUNCTION</scope>
    <scope>CATALYTIC ACTIVITY</scope>
    <scope>SUBUNIT</scope>
    <scope>ACTIVITY REGULATION</scope>
</reference>
<reference key="2">
    <citation type="journal article" date="2000" name="Nature">
        <title>Sequence and analysis of chromosome 3 of the plant Arabidopsis thaliana.</title>
        <authorList>
            <person name="Salanoubat M."/>
            <person name="Lemcke K."/>
            <person name="Rieger M."/>
            <person name="Ansorge W."/>
            <person name="Unseld M."/>
            <person name="Fartmann B."/>
            <person name="Valle G."/>
            <person name="Bloecker H."/>
            <person name="Perez-Alonso M."/>
            <person name="Obermaier B."/>
            <person name="Delseny M."/>
            <person name="Boutry M."/>
            <person name="Grivell L.A."/>
            <person name="Mache R."/>
            <person name="Puigdomenech P."/>
            <person name="De Simone V."/>
            <person name="Choisne N."/>
            <person name="Artiguenave F."/>
            <person name="Robert C."/>
            <person name="Brottier P."/>
            <person name="Wincker P."/>
            <person name="Cattolico L."/>
            <person name="Weissenbach J."/>
            <person name="Saurin W."/>
            <person name="Quetier F."/>
            <person name="Schaefer M."/>
            <person name="Mueller-Auer S."/>
            <person name="Gabel C."/>
            <person name="Fuchs M."/>
            <person name="Benes V."/>
            <person name="Wurmbach E."/>
            <person name="Drzonek H."/>
            <person name="Erfle H."/>
            <person name="Jordan N."/>
            <person name="Bangert S."/>
            <person name="Wiedelmann R."/>
            <person name="Kranz H."/>
            <person name="Voss H."/>
            <person name="Holland R."/>
            <person name="Brandt P."/>
            <person name="Nyakatura G."/>
            <person name="Vezzi A."/>
            <person name="D'Angelo M."/>
            <person name="Pallavicini A."/>
            <person name="Toppo S."/>
            <person name="Simionati B."/>
            <person name="Conrad A."/>
            <person name="Hornischer K."/>
            <person name="Kauer G."/>
            <person name="Loehnert T.-H."/>
            <person name="Nordsiek G."/>
            <person name="Reichelt J."/>
            <person name="Scharfe M."/>
            <person name="Schoen O."/>
            <person name="Bargues M."/>
            <person name="Terol J."/>
            <person name="Climent J."/>
            <person name="Navarro P."/>
            <person name="Collado C."/>
            <person name="Perez-Perez A."/>
            <person name="Ottenwaelder B."/>
            <person name="Duchemin D."/>
            <person name="Cooke R."/>
            <person name="Laudie M."/>
            <person name="Berger-Llauro C."/>
            <person name="Purnelle B."/>
            <person name="Masuy D."/>
            <person name="de Haan M."/>
            <person name="Maarse A.C."/>
            <person name="Alcaraz J.-P."/>
            <person name="Cottet A."/>
            <person name="Casacuberta E."/>
            <person name="Monfort A."/>
            <person name="Argiriou A."/>
            <person name="Flores M."/>
            <person name="Liguori R."/>
            <person name="Vitale D."/>
            <person name="Mannhaupt G."/>
            <person name="Haase D."/>
            <person name="Schoof H."/>
            <person name="Rudd S."/>
            <person name="Zaccaria P."/>
            <person name="Mewes H.-W."/>
            <person name="Mayer K.F.X."/>
            <person name="Kaul S."/>
            <person name="Town C.D."/>
            <person name="Koo H.L."/>
            <person name="Tallon L.J."/>
            <person name="Jenkins J."/>
            <person name="Rooney T."/>
            <person name="Rizzo M."/>
            <person name="Walts A."/>
            <person name="Utterback T."/>
            <person name="Fujii C.Y."/>
            <person name="Shea T.P."/>
            <person name="Creasy T.H."/>
            <person name="Haas B."/>
            <person name="Maiti R."/>
            <person name="Wu D."/>
            <person name="Peterson J."/>
            <person name="Van Aken S."/>
            <person name="Pai G."/>
            <person name="Militscher J."/>
            <person name="Sellers P."/>
            <person name="Gill J.E."/>
            <person name="Feldblyum T.V."/>
            <person name="Preuss D."/>
            <person name="Lin X."/>
            <person name="Nierman W.C."/>
            <person name="Salzberg S.L."/>
            <person name="White O."/>
            <person name="Venter J.C."/>
            <person name="Fraser C.M."/>
            <person name="Kaneko T."/>
            <person name="Nakamura Y."/>
            <person name="Sato S."/>
            <person name="Kato T."/>
            <person name="Asamizu E."/>
            <person name="Sasamoto S."/>
            <person name="Kimura T."/>
            <person name="Idesawa K."/>
            <person name="Kawashima K."/>
            <person name="Kishida Y."/>
            <person name="Kiyokawa C."/>
            <person name="Kohara M."/>
            <person name="Matsumoto M."/>
            <person name="Matsuno A."/>
            <person name="Muraki A."/>
            <person name="Nakayama S."/>
            <person name="Nakazaki N."/>
            <person name="Shinpo S."/>
            <person name="Takeuchi C."/>
            <person name="Wada T."/>
            <person name="Watanabe A."/>
            <person name="Yamada M."/>
            <person name="Yasuda M."/>
            <person name="Tabata S."/>
        </authorList>
    </citation>
    <scope>NUCLEOTIDE SEQUENCE [LARGE SCALE GENOMIC DNA]</scope>
    <source>
        <strain>cv. Columbia</strain>
    </source>
</reference>
<reference key="3">
    <citation type="journal article" date="2017" name="Plant J.">
        <title>Araport11: a complete reannotation of the Arabidopsis thaliana reference genome.</title>
        <authorList>
            <person name="Cheng C.Y."/>
            <person name="Krishnakumar V."/>
            <person name="Chan A.P."/>
            <person name="Thibaud-Nissen F."/>
            <person name="Schobel S."/>
            <person name="Town C.D."/>
        </authorList>
    </citation>
    <scope>GENOME REANNOTATION</scope>
    <source>
        <strain>cv. Columbia</strain>
    </source>
</reference>
<reference key="4">
    <citation type="journal article" date="2003" name="Science">
        <title>Empirical analysis of transcriptional activity in the Arabidopsis genome.</title>
        <authorList>
            <person name="Yamada K."/>
            <person name="Lim J."/>
            <person name="Dale J.M."/>
            <person name="Chen H."/>
            <person name="Shinn P."/>
            <person name="Palm C.J."/>
            <person name="Southwick A.M."/>
            <person name="Wu H.C."/>
            <person name="Kim C.J."/>
            <person name="Nguyen M."/>
            <person name="Pham P.K."/>
            <person name="Cheuk R.F."/>
            <person name="Karlin-Newmann G."/>
            <person name="Liu S.X."/>
            <person name="Lam B."/>
            <person name="Sakano H."/>
            <person name="Wu T."/>
            <person name="Yu G."/>
            <person name="Miranda M."/>
            <person name="Quach H.L."/>
            <person name="Tripp M."/>
            <person name="Chang C.H."/>
            <person name="Lee J.M."/>
            <person name="Toriumi M.J."/>
            <person name="Chan M.M."/>
            <person name="Tang C.C."/>
            <person name="Onodera C.S."/>
            <person name="Deng J.M."/>
            <person name="Akiyama K."/>
            <person name="Ansari Y."/>
            <person name="Arakawa T."/>
            <person name="Banh J."/>
            <person name="Banno F."/>
            <person name="Bowser L."/>
            <person name="Brooks S.Y."/>
            <person name="Carninci P."/>
            <person name="Chao Q."/>
            <person name="Choy N."/>
            <person name="Enju A."/>
            <person name="Goldsmith A.D."/>
            <person name="Gurjal M."/>
            <person name="Hansen N.F."/>
            <person name="Hayashizaki Y."/>
            <person name="Johnson-Hopson C."/>
            <person name="Hsuan V.W."/>
            <person name="Iida K."/>
            <person name="Karnes M."/>
            <person name="Khan S."/>
            <person name="Koesema E."/>
            <person name="Ishida J."/>
            <person name="Jiang P.X."/>
            <person name="Jones T."/>
            <person name="Kawai J."/>
            <person name="Kamiya A."/>
            <person name="Meyers C."/>
            <person name="Nakajima M."/>
            <person name="Narusaka M."/>
            <person name="Seki M."/>
            <person name="Sakurai T."/>
            <person name="Satou M."/>
            <person name="Tamse R."/>
            <person name="Vaysberg M."/>
            <person name="Wallender E.K."/>
            <person name="Wong C."/>
            <person name="Yamamura Y."/>
            <person name="Yuan S."/>
            <person name="Shinozaki K."/>
            <person name="Davis R.W."/>
            <person name="Theologis A."/>
            <person name="Ecker J.R."/>
        </authorList>
    </citation>
    <scope>NUCLEOTIDE SEQUENCE [LARGE SCALE MRNA] (ISOFORM 1)</scope>
    <source>
        <strain>cv. Columbia</strain>
    </source>
</reference>
<organism>
    <name type="scientific">Arabidopsis thaliana</name>
    <name type="common">Mouse-ear cress</name>
    <dbReference type="NCBI Taxonomy" id="3702"/>
    <lineage>
        <taxon>Eukaryota</taxon>
        <taxon>Viridiplantae</taxon>
        <taxon>Streptophyta</taxon>
        <taxon>Embryophyta</taxon>
        <taxon>Tracheophyta</taxon>
        <taxon>Spermatophyta</taxon>
        <taxon>Magnoliopsida</taxon>
        <taxon>eudicotyledons</taxon>
        <taxon>Gunneridae</taxon>
        <taxon>Pentapetalae</taxon>
        <taxon>rosids</taxon>
        <taxon>malvids</taxon>
        <taxon>Brassicales</taxon>
        <taxon>Brassicaceae</taxon>
        <taxon>Camelineae</taxon>
        <taxon>Arabidopsis</taxon>
    </lineage>
</organism>
<comment type="function">
    <text evidence="2">The probable reversibility of the MTHFR reaction in plants suggests that they can metabolize the methyl group of 5,10-methylenetetrahydrofolate to serine, sugars and starch.</text>
</comment>
<comment type="catalytic activity">
    <reaction evidence="2">
        <text>(6S)-5-methyl-5,6,7,8-tetrahydrofolate + NAD(+) = (6R)-5,10-methylene-5,6,7,8-tetrahydrofolate + NADH + H(+)</text>
        <dbReference type="Rhea" id="RHEA:19821"/>
        <dbReference type="ChEBI" id="CHEBI:15378"/>
        <dbReference type="ChEBI" id="CHEBI:15636"/>
        <dbReference type="ChEBI" id="CHEBI:18608"/>
        <dbReference type="ChEBI" id="CHEBI:57540"/>
        <dbReference type="ChEBI" id="CHEBI:57945"/>
        <dbReference type="EC" id="1.5.1.54"/>
    </reaction>
</comment>
<comment type="cofactor">
    <cofactor evidence="1">
        <name>FAD</name>
        <dbReference type="ChEBI" id="CHEBI:57692"/>
    </cofactor>
</comment>
<comment type="activity regulation">
    <text evidence="2">Plant MTHFRs strongly prefer NADH over NADPH. Not inhibited by methionine or S-adenosylmethionine.</text>
</comment>
<comment type="pathway">
    <text>One-carbon metabolism; tetrahydrofolate interconversion.</text>
</comment>
<comment type="subunit">
    <text evidence="2">Homodimer.</text>
</comment>
<comment type="alternative products">
    <event type="alternative splicing"/>
    <isoform>
        <id>Q9SE60-1</id>
        <name>1</name>
        <sequence type="displayed"/>
    </isoform>
    <isoform>
        <id>Q9SE60-2</id>
        <name>2</name>
        <sequence type="described" ref="VSP_018093 VSP_018094"/>
    </isoform>
</comment>
<comment type="miscellaneous">
    <molecule>Isoform 2</molecule>
    <text evidence="3">May be due to an intron retention.</text>
</comment>
<comment type="similarity">
    <text evidence="3">Belongs to the methylenetetrahydrofolate reductase family.</text>
</comment>
<accession>Q9SE60</accession>
<accession>Q3EAG9</accession>
<feature type="chain" id="PRO_0000190249" description="Methylenetetrahydrofolate reductase (NADH) 1">
    <location>
        <begin position="1"/>
        <end position="592"/>
    </location>
</feature>
<feature type="active site" description="Proton donor/acceptor" evidence="1">
    <location>
        <position position="21"/>
    </location>
</feature>
<feature type="binding site" evidence="1">
    <location>
        <begin position="21"/>
        <end position="26"/>
    </location>
    <ligand>
        <name>NAD(+)</name>
        <dbReference type="ChEBI" id="CHEBI:57540"/>
    </ligand>
</feature>
<feature type="binding site" evidence="1">
    <location>
        <begin position="52"/>
        <end position="53"/>
    </location>
    <ligand>
        <name>FAD</name>
        <dbReference type="ChEBI" id="CHEBI:57692"/>
    </ligand>
</feature>
<feature type="binding site" evidence="1">
    <location>
        <begin position="52"/>
        <end position="53"/>
    </location>
    <ligand>
        <name>NAD(+)</name>
        <dbReference type="ChEBI" id="CHEBI:57540"/>
    </ligand>
</feature>
<feature type="binding site" evidence="1">
    <location>
        <position position="81"/>
    </location>
    <ligand>
        <name>FAD</name>
        <dbReference type="ChEBI" id="CHEBI:57692"/>
    </ligand>
</feature>
<feature type="binding site" evidence="1">
    <location>
        <begin position="111"/>
        <end position="113"/>
    </location>
    <ligand>
        <name>FAD</name>
        <dbReference type="ChEBI" id="CHEBI:57692"/>
    </ligand>
</feature>
<feature type="binding site" evidence="1">
    <location>
        <position position="113"/>
    </location>
    <ligand>
        <name>substrate</name>
    </ligand>
</feature>
<feature type="binding site" evidence="1">
    <location>
        <position position="153"/>
    </location>
    <ligand>
        <name>FAD</name>
        <dbReference type="ChEBI" id="CHEBI:57692"/>
    </ligand>
</feature>
<feature type="binding site" evidence="1">
    <location>
        <begin position="157"/>
        <end position="160"/>
    </location>
    <ligand>
        <name>FAD</name>
        <dbReference type="ChEBI" id="CHEBI:57692"/>
    </ligand>
</feature>
<feature type="binding site" evidence="1">
    <location>
        <position position="175"/>
    </location>
    <ligand>
        <name>FAD</name>
        <dbReference type="ChEBI" id="CHEBI:57692"/>
    </ligand>
</feature>
<feature type="binding site" evidence="1">
    <location>
        <position position="182"/>
    </location>
    <ligand>
        <name>FAD</name>
        <dbReference type="ChEBI" id="CHEBI:57692"/>
    </ligand>
</feature>
<feature type="binding site" evidence="1">
    <location>
        <position position="193"/>
    </location>
    <ligand>
        <name>substrate</name>
    </ligand>
</feature>
<feature type="binding site" evidence="1">
    <location>
        <position position="285"/>
    </location>
    <ligand>
        <name>substrate</name>
    </ligand>
</feature>
<feature type="splice variant" id="VSP_018093" description="In isoform 2." evidence="3">
    <original>KFKELCIGNLKSSPWSELDGLQPET</original>
    <variation>VGFTLRTLVQIVSISFPHTHLHIFM</variation>
    <location>
        <begin position="397"/>
        <end position="421"/>
    </location>
</feature>
<feature type="splice variant" id="VSP_018094" description="In isoform 2." evidence="3">
    <location>
        <begin position="422"/>
        <end position="592"/>
    </location>
</feature>
<dbReference type="EC" id="1.5.1.54" evidence="2"/>
<dbReference type="EMBL" id="AF181966">
    <property type="protein sequence ID" value="AAD55787.1"/>
    <property type="molecule type" value="mRNA"/>
</dbReference>
<dbReference type="EMBL" id="AL138647">
    <property type="protein sequence ID" value="CAB75816.1"/>
    <property type="molecule type" value="Genomic_DNA"/>
</dbReference>
<dbReference type="EMBL" id="CP002686">
    <property type="protein sequence ID" value="AEE79992.1"/>
    <property type="molecule type" value="Genomic_DNA"/>
</dbReference>
<dbReference type="EMBL" id="CP002686">
    <property type="protein sequence ID" value="AEE79994.1"/>
    <property type="molecule type" value="Genomic_DNA"/>
</dbReference>
<dbReference type="EMBL" id="AY122922">
    <property type="protein sequence ID" value="AAM67455.1"/>
    <property type="molecule type" value="mRNA"/>
</dbReference>
<dbReference type="EMBL" id="AY070034">
    <property type="protein sequence ID" value="AAL49791.1"/>
    <property type="molecule type" value="mRNA"/>
</dbReference>
<dbReference type="PIR" id="T47821">
    <property type="entry name" value="T47821"/>
</dbReference>
<dbReference type="RefSeq" id="NP_191556.1">
    <molecule id="Q9SE60-1"/>
    <property type="nucleotide sequence ID" value="NM_115860.4"/>
</dbReference>
<dbReference type="RefSeq" id="NP_850723.1">
    <molecule id="Q9SE60-2"/>
    <property type="nucleotide sequence ID" value="NM_180392.1"/>
</dbReference>
<dbReference type="SMR" id="Q9SE60"/>
<dbReference type="BioGRID" id="10481">
    <property type="interactions" value="13"/>
</dbReference>
<dbReference type="FunCoup" id="Q9SE60">
    <property type="interactions" value="2685"/>
</dbReference>
<dbReference type="IntAct" id="Q9SE60">
    <property type="interactions" value="1"/>
</dbReference>
<dbReference type="STRING" id="3702.Q9SE60"/>
<dbReference type="GlyGen" id="Q9SE60">
    <property type="glycosylation" value="1 site"/>
</dbReference>
<dbReference type="iPTMnet" id="Q9SE60"/>
<dbReference type="MetOSite" id="Q9SE60"/>
<dbReference type="PaxDb" id="3702-AT3G59970.3"/>
<dbReference type="ProteomicsDB" id="250811">
    <molecule id="Q9SE60-1"/>
</dbReference>
<dbReference type="EnsemblPlants" id="AT3G59970.1">
    <molecule id="Q9SE60-2"/>
    <property type="protein sequence ID" value="AT3G59970.1"/>
    <property type="gene ID" value="AT3G59970"/>
</dbReference>
<dbReference type="EnsemblPlants" id="AT3G59970.3">
    <molecule id="Q9SE60-1"/>
    <property type="protein sequence ID" value="AT3G59970.3"/>
    <property type="gene ID" value="AT3G59970"/>
</dbReference>
<dbReference type="GeneID" id="825167"/>
<dbReference type="Gramene" id="AT3G59970.1">
    <molecule id="Q9SE60-2"/>
    <property type="protein sequence ID" value="AT3G59970.1"/>
    <property type="gene ID" value="AT3G59970"/>
</dbReference>
<dbReference type="Gramene" id="AT3G59970.3">
    <molecule id="Q9SE60-1"/>
    <property type="protein sequence ID" value="AT3G59970.3"/>
    <property type="gene ID" value="AT3G59970"/>
</dbReference>
<dbReference type="KEGG" id="ath:AT3G59970"/>
<dbReference type="Araport" id="AT3G59970"/>
<dbReference type="TAIR" id="AT3G59970">
    <property type="gene designation" value="MTHFR1"/>
</dbReference>
<dbReference type="eggNOG" id="KOG0564">
    <property type="taxonomic scope" value="Eukaryota"/>
</dbReference>
<dbReference type="HOGENOM" id="CLU_025841_2_2_1"/>
<dbReference type="InParanoid" id="Q9SE60"/>
<dbReference type="OMA" id="MNTHETP"/>
<dbReference type="OrthoDB" id="16284at2759"/>
<dbReference type="PhylomeDB" id="Q9SE60"/>
<dbReference type="BioCyc" id="ARA:AT3G59970-MONOMER"/>
<dbReference type="BRENDA" id="1.5.1.54">
    <property type="organism ID" value="399"/>
</dbReference>
<dbReference type="SABIO-RK" id="Q9SE60"/>
<dbReference type="UniPathway" id="UPA00193"/>
<dbReference type="PRO" id="PR:Q9SE60"/>
<dbReference type="Proteomes" id="UP000006548">
    <property type="component" value="Chromosome 3"/>
</dbReference>
<dbReference type="ExpressionAtlas" id="Q9SE60">
    <property type="expression patterns" value="baseline and differential"/>
</dbReference>
<dbReference type="GO" id="GO:0005829">
    <property type="term" value="C:cytosol"/>
    <property type="evidence" value="ECO:0007005"/>
    <property type="project" value="TAIR"/>
</dbReference>
<dbReference type="GO" id="GO:0106312">
    <property type="term" value="F:methylenetetrahydrofolate reductase (NADH) activity"/>
    <property type="evidence" value="ECO:0007669"/>
    <property type="project" value="RHEA"/>
</dbReference>
<dbReference type="GO" id="GO:0009086">
    <property type="term" value="P:methionine biosynthetic process"/>
    <property type="evidence" value="ECO:0007669"/>
    <property type="project" value="InterPro"/>
</dbReference>
<dbReference type="GO" id="GO:0035999">
    <property type="term" value="P:tetrahydrofolate interconversion"/>
    <property type="evidence" value="ECO:0007669"/>
    <property type="project" value="UniProtKB-UniPathway"/>
</dbReference>
<dbReference type="CDD" id="cd00537">
    <property type="entry name" value="MTHFR"/>
    <property type="match status" value="1"/>
</dbReference>
<dbReference type="FunFam" id="3.20.20.220:FF:000005">
    <property type="entry name" value="Methylenetetrahydrofolate reductase"/>
    <property type="match status" value="1"/>
</dbReference>
<dbReference type="Gene3D" id="3.20.20.220">
    <property type="match status" value="1"/>
</dbReference>
<dbReference type="InterPro" id="IPR029041">
    <property type="entry name" value="FAD-linked_oxidoreductase-like"/>
</dbReference>
<dbReference type="InterPro" id="IPR004621">
    <property type="entry name" value="Fadh2_euk"/>
</dbReference>
<dbReference type="InterPro" id="IPR003171">
    <property type="entry name" value="Mehydrof_redctse-like"/>
</dbReference>
<dbReference type="InterPro" id="IPR004620">
    <property type="entry name" value="MTHF_reductase_bac"/>
</dbReference>
<dbReference type="InterPro" id="IPR053806">
    <property type="entry name" value="MTHFR_C"/>
</dbReference>
<dbReference type="NCBIfam" id="TIGR00676">
    <property type="entry name" value="fadh2"/>
    <property type="match status" value="1"/>
</dbReference>
<dbReference type="NCBIfam" id="TIGR00677">
    <property type="entry name" value="fadh2_euk"/>
    <property type="match status" value="1"/>
</dbReference>
<dbReference type="PANTHER" id="PTHR45754">
    <property type="entry name" value="METHYLENETETRAHYDROFOLATE REDUCTASE"/>
    <property type="match status" value="1"/>
</dbReference>
<dbReference type="PANTHER" id="PTHR45754:SF4">
    <property type="entry name" value="METHYLENETETRAHYDROFOLATE REDUCTASE (NADH) 1"/>
    <property type="match status" value="1"/>
</dbReference>
<dbReference type="Pfam" id="PF02219">
    <property type="entry name" value="MTHFR"/>
    <property type="match status" value="1"/>
</dbReference>
<dbReference type="Pfam" id="PF21895">
    <property type="entry name" value="MTHFR_C"/>
    <property type="match status" value="1"/>
</dbReference>
<dbReference type="SUPFAM" id="SSF51730">
    <property type="entry name" value="FAD-linked oxidoreductase"/>
    <property type="match status" value="1"/>
</dbReference>
<name>MTHR1_ARATH</name>
<keyword id="KW-0025">Alternative splicing</keyword>
<keyword id="KW-0274">FAD</keyword>
<keyword id="KW-0285">Flavoprotein</keyword>
<keyword id="KW-0520">NAD</keyword>
<keyword id="KW-0560">Oxidoreductase</keyword>
<keyword id="KW-1185">Reference proteome</keyword>